<gene>
    <name evidence="1" type="primary">acpP</name>
    <name type="ordered locus">PAM_739</name>
</gene>
<name>ACP_ONYPE</name>
<reference key="1">
    <citation type="journal article" date="2004" name="Nat. Genet.">
        <title>Reductive evolution suggested from the complete genome sequence of a plant-pathogenic phytoplasma.</title>
        <authorList>
            <person name="Oshima K."/>
            <person name="Kakizawa S."/>
            <person name="Nishigawa H."/>
            <person name="Jung H.-Y."/>
            <person name="Wei W."/>
            <person name="Suzuki S."/>
            <person name="Arashida R."/>
            <person name="Nakata D."/>
            <person name="Miyata S."/>
            <person name="Ugaki M."/>
            <person name="Namba S."/>
        </authorList>
    </citation>
    <scope>NUCLEOTIDE SEQUENCE [LARGE SCALE GENOMIC DNA]</scope>
    <source>
        <strain>OY-M</strain>
    </source>
</reference>
<keyword id="KW-0963">Cytoplasm</keyword>
<keyword id="KW-0275">Fatty acid biosynthesis</keyword>
<keyword id="KW-0276">Fatty acid metabolism</keyword>
<keyword id="KW-0444">Lipid biosynthesis</keyword>
<keyword id="KW-0443">Lipid metabolism</keyword>
<keyword id="KW-0596">Phosphopantetheine</keyword>
<keyword id="KW-0597">Phosphoprotein</keyword>
<accession>Q6YPI8</accession>
<evidence type="ECO:0000255" key="1">
    <source>
        <dbReference type="HAMAP-Rule" id="MF_01217"/>
    </source>
</evidence>
<evidence type="ECO:0000255" key="2">
    <source>
        <dbReference type="PROSITE-ProRule" id="PRU00258"/>
    </source>
</evidence>
<dbReference type="EMBL" id="AP006628">
    <property type="protein sequence ID" value="BAD04824.1"/>
    <property type="molecule type" value="Genomic_DNA"/>
</dbReference>
<dbReference type="SMR" id="Q6YPI8"/>
<dbReference type="STRING" id="262768.PAM_739"/>
<dbReference type="KEGG" id="poy:PAM_739"/>
<dbReference type="eggNOG" id="COG0236">
    <property type="taxonomic scope" value="Bacteria"/>
</dbReference>
<dbReference type="HOGENOM" id="CLU_108696_5_2_14"/>
<dbReference type="BioCyc" id="OYEL262768:G1G26-894-MONOMER"/>
<dbReference type="UniPathway" id="UPA00094"/>
<dbReference type="Proteomes" id="UP000002523">
    <property type="component" value="Chromosome"/>
</dbReference>
<dbReference type="GO" id="GO:0005829">
    <property type="term" value="C:cytosol"/>
    <property type="evidence" value="ECO:0007669"/>
    <property type="project" value="TreeGrafter"/>
</dbReference>
<dbReference type="GO" id="GO:0016020">
    <property type="term" value="C:membrane"/>
    <property type="evidence" value="ECO:0007669"/>
    <property type="project" value="GOC"/>
</dbReference>
<dbReference type="GO" id="GO:0000035">
    <property type="term" value="F:acyl binding"/>
    <property type="evidence" value="ECO:0007669"/>
    <property type="project" value="TreeGrafter"/>
</dbReference>
<dbReference type="GO" id="GO:0000036">
    <property type="term" value="F:acyl carrier activity"/>
    <property type="evidence" value="ECO:0007669"/>
    <property type="project" value="UniProtKB-UniRule"/>
</dbReference>
<dbReference type="GO" id="GO:0009245">
    <property type="term" value="P:lipid A biosynthetic process"/>
    <property type="evidence" value="ECO:0007669"/>
    <property type="project" value="TreeGrafter"/>
</dbReference>
<dbReference type="Gene3D" id="1.10.1200.10">
    <property type="entry name" value="ACP-like"/>
    <property type="match status" value="1"/>
</dbReference>
<dbReference type="HAMAP" id="MF_01217">
    <property type="entry name" value="Acyl_carrier"/>
    <property type="match status" value="1"/>
</dbReference>
<dbReference type="InterPro" id="IPR003231">
    <property type="entry name" value="ACP"/>
</dbReference>
<dbReference type="InterPro" id="IPR036736">
    <property type="entry name" value="ACP-like_sf"/>
</dbReference>
<dbReference type="InterPro" id="IPR009081">
    <property type="entry name" value="PP-bd_ACP"/>
</dbReference>
<dbReference type="InterPro" id="IPR006162">
    <property type="entry name" value="Ppantetheine_attach_site"/>
</dbReference>
<dbReference type="NCBIfam" id="TIGR00517">
    <property type="entry name" value="acyl_carrier"/>
    <property type="match status" value="1"/>
</dbReference>
<dbReference type="NCBIfam" id="NF002148">
    <property type="entry name" value="PRK00982.1-2"/>
    <property type="match status" value="1"/>
</dbReference>
<dbReference type="NCBIfam" id="NF002150">
    <property type="entry name" value="PRK00982.1-4"/>
    <property type="match status" value="1"/>
</dbReference>
<dbReference type="PANTHER" id="PTHR20863">
    <property type="entry name" value="ACYL CARRIER PROTEIN"/>
    <property type="match status" value="1"/>
</dbReference>
<dbReference type="PANTHER" id="PTHR20863:SF76">
    <property type="entry name" value="CARRIER DOMAIN-CONTAINING PROTEIN"/>
    <property type="match status" value="1"/>
</dbReference>
<dbReference type="Pfam" id="PF00550">
    <property type="entry name" value="PP-binding"/>
    <property type="match status" value="1"/>
</dbReference>
<dbReference type="SUPFAM" id="SSF47336">
    <property type="entry name" value="ACP-like"/>
    <property type="match status" value="1"/>
</dbReference>
<dbReference type="PROSITE" id="PS50075">
    <property type="entry name" value="CARRIER"/>
    <property type="match status" value="1"/>
</dbReference>
<dbReference type="PROSITE" id="PS00012">
    <property type="entry name" value="PHOSPHOPANTETHEINE"/>
    <property type="match status" value="1"/>
</dbReference>
<comment type="function">
    <text evidence="1">Carrier of the growing fatty acid chain in fatty acid biosynthesis.</text>
</comment>
<comment type="pathway">
    <text evidence="1">Lipid metabolism; fatty acid biosynthesis.</text>
</comment>
<comment type="subcellular location">
    <subcellularLocation>
        <location evidence="1">Cytoplasm</location>
    </subcellularLocation>
</comment>
<comment type="PTM">
    <text evidence="1">4'-phosphopantetheine is transferred from CoA to a specific serine of apo-ACP by AcpS. This modification is essential for activity because fatty acids are bound in thioester linkage to the sulfhydryl of the prosthetic group.</text>
</comment>
<comment type="similarity">
    <text evidence="1">Belongs to the acyl carrier protein (ACP) family.</text>
</comment>
<proteinExistence type="inferred from homology"/>
<sequence length="76" mass="8598">MVFEKIKALIATQLSLDASTITLDTRFKEDLGLDSLDALELVMEVEKTFQINISDATLQNFKTVQDIVFYITKNTP</sequence>
<protein>
    <recommendedName>
        <fullName evidence="1">Acyl carrier protein</fullName>
        <shortName evidence="1">ACP</shortName>
    </recommendedName>
</protein>
<feature type="chain" id="PRO_0000180160" description="Acyl carrier protein">
    <location>
        <begin position="1"/>
        <end position="76"/>
    </location>
</feature>
<feature type="domain" description="Carrier" evidence="2">
    <location>
        <begin position="1"/>
        <end position="75"/>
    </location>
</feature>
<feature type="modified residue" description="O-(pantetheine 4'-phosphoryl)serine" evidence="2">
    <location>
        <position position="35"/>
    </location>
</feature>
<organism>
    <name type="scientific">Onion yellows phytoplasma (strain OY-M)</name>
    <dbReference type="NCBI Taxonomy" id="262768"/>
    <lineage>
        <taxon>Bacteria</taxon>
        <taxon>Bacillati</taxon>
        <taxon>Mycoplasmatota</taxon>
        <taxon>Mollicutes</taxon>
        <taxon>Acholeplasmatales</taxon>
        <taxon>Acholeplasmataceae</taxon>
        <taxon>Candidatus Phytoplasma</taxon>
        <taxon>16SrI (Aster yellows group)</taxon>
    </lineage>
</organism>